<sequence length="319" mass="36761">MATTKPYRVLLYYMYTTIENPEEFAAEHLEFCNSLELKGRILVAKEGINGTCSGTVEQTEKYMEAMNNDPRFDGIVFKIDEADGHAFKKMHVRPRPELVTLRLEDDINPHEITGKYLEPKDFYEAMKQEDTVIIDARNDYEFDLGHFKGAIKPDIESFRELPDWIRENKEVLEGKKILTYCTGGIRCEKFSGWLVREGYEDVSQLHGGIVTYGKDPEVQGELWDGQCYVFDERIAVPVNQKEHVIVGKDHFTGEPCERYVNCANPECNKKILCSEENEAKYLRACSHECRVSPRNRYVIQHELTEEQVAAALEKIEAGK</sequence>
<name>TRHO_BACAC</name>
<evidence type="ECO:0000255" key="1">
    <source>
        <dbReference type="HAMAP-Rule" id="MF_00469"/>
    </source>
</evidence>
<dbReference type="EC" id="1.14.-.-" evidence="1"/>
<dbReference type="EMBL" id="CP001215">
    <property type="protein sequence ID" value="ACP13516.1"/>
    <property type="molecule type" value="Genomic_DNA"/>
</dbReference>
<dbReference type="RefSeq" id="WP_000246229.1">
    <property type="nucleotide sequence ID" value="NC_012581.1"/>
</dbReference>
<dbReference type="SMR" id="C3L6L9"/>
<dbReference type="KEGG" id="bah:BAMEG_2712"/>
<dbReference type="HOGENOM" id="CLU_038878_1_0_9"/>
<dbReference type="GO" id="GO:0016705">
    <property type="term" value="F:oxidoreductase activity, acting on paired donors, with incorporation or reduction of molecular oxygen"/>
    <property type="evidence" value="ECO:0007669"/>
    <property type="project" value="UniProtKB-UniRule"/>
</dbReference>
<dbReference type="GO" id="GO:0006400">
    <property type="term" value="P:tRNA modification"/>
    <property type="evidence" value="ECO:0007669"/>
    <property type="project" value="UniProtKB-UniRule"/>
</dbReference>
<dbReference type="CDD" id="cd01518">
    <property type="entry name" value="RHOD_YceA"/>
    <property type="match status" value="1"/>
</dbReference>
<dbReference type="Gene3D" id="3.30.70.100">
    <property type="match status" value="1"/>
</dbReference>
<dbReference type="Gene3D" id="3.40.250.10">
    <property type="entry name" value="Rhodanese-like domain"/>
    <property type="match status" value="1"/>
</dbReference>
<dbReference type="HAMAP" id="MF_00469">
    <property type="entry name" value="TrhO"/>
    <property type="match status" value="1"/>
</dbReference>
<dbReference type="InterPro" id="IPR001763">
    <property type="entry name" value="Rhodanese-like_dom"/>
</dbReference>
<dbReference type="InterPro" id="IPR036873">
    <property type="entry name" value="Rhodanese-like_dom_sf"/>
</dbReference>
<dbReference type="InterPro" id="IPR022111">
    <property type="entry name" value="Rhodanese_C"/>
</dbReference>
<dbReference type="InterPro" id="IPR020936">
    <property type="entry name" value="TrhO"/>
</dbReference>
<dbReference type="InterPro" id="IPR040503">
    <property type="entry name" value="TRHO_N"/>
</dbReference>
<dbReference type="NCBIfam" id="NF001135">
    <property type="entry name" value="PRK00142.1-3"/>
    <property type="match status" value="1"/>
</dbReference>
<dbReference type="PANTHER" id="PTHR43268:SF3">
    <property type="entry name" value="RHODANESE-LIKE DOMAIN-CONTAINING PROTEIN 7-RELATED"/>
    <property type="match status" value="1"/>
</dbReference>
<dbReference type="PANTHER" id="PTHR43268">
    <property type="entry name" value="THIOSULFATE SULFURTRANSFERASE/RHODANESE-LIKE DOMAIN-CONTAINING PROTEIN 2"/>
    <property type="match status" value="1"/>
</dbReference>
<dbReference type="Pfam" id="PF00581">
    <property type="entry name" value="Rhodanese"/>
    <property type="match status" value="1"/>
</dbReference>
<dbReference type="Pfam" id="PF12368">
    <property type="entry name" value="Rhodanese_C"/>
    <property type="match status" value="1"/>
</dbReference>
<dbReference type="Pfam" id="PF17773">
    <property type="entry name" value="UPF0176_N"/>
    <property type="match status" value="1"/>
</dbReference>
<dbReference type="SMART" id="SM00450">
    <property type="entry name" value="RHOD"/>
    <property type="match status" value="1"/>
</dbReference>
<dbReference type="SUPFAM" id="SSF52821">
    <property type="entry name" value="Rhodanese/Cell cycle control phosphatase"/>
    <property type="match status" value="1"/>
</dbReference>
<dbReference type="PROSITE" id="PS50206">
    <property type="entry name" value="RHODANESE_3"/>
    <property type="match status" value="1"/>
</dbReference>
<proteinExistence type="inferred from homology"/>
<organism>
    <name type="scientific">Bacillus anthracis (strain CDC 684 / NRRL 3495)</name>
    <dbReference type="NCBI Taxonomy" id="568206"/>
    <lineage>
        <taxon>Bacteria</taxon>
        <taxon>Bacillati</taxon>
        <taxon>Bacillota</taxon>
        <taxon>Bacilli</taxon>
        <taxon>Bacillales</taxon>
        <taxon>Bacillaceae</taxon>
        <taxon>Bacillus</taxon>
        <taxon>Bacillus cereus group</taxon>
    </lineage>
</organism>
<reference key="1">
    <citation type="submission" date="2008-10" db="EMBL/GenBank/DDBJ databases">
        <title>Genome sequence of Bacillus anthracis str. CDC 684.</title>
        <authorList>
            <person name="Dodson R.J."/>
            <person name="Munk A.C."/>
            <person name="Brettin T."/>
            <person name="Bruce D."/>
            <person name="Detter C."/>
            <person name="Tapia R."/>
            <person name="Han C."/>
            <person name="Sutton G."/>
            <person name="Sims D."/>
        </authorList>
    </citation>
    <scope>NUCLEOTIDE SEQUENCE [LARGE SCALE GENOMIC DNA]</scope>
    <source>
        <strain>CDC 684 / NRRL 3495</strain>
    </source>
</reference>
<gene>
    <name evidence="1" type="primary">trhO</name>
    <name type="ordered locus">BAMEG_2712</name>
</gene>
<comment type="function">
    <text evidence="1">Catalyzes oxygen-dependent 5-hydroxyuridine (ho5U) modification at position 34 in tRNAs.</text>
</comment>
<comment type="catalytic activity">
    <reaction evidence="1">
        <text>uridine(34) in tRNA + AH2 + O2 = 5-hydroxyuridine(34) in tRNA + A + H2O</text>
        <dbReference type="Rhea" id="RHEA:64224"/>
        <dbReference type="Rhea" id="RHEA-COMP:11727"/>
        <dbReference type="Rhea" id="RHEA-COMP:13381"/>
        <dbReference type="ChEBI" id="CHEBI:13193"/>
        <dbReference type="ChEBI" id="CHEBI:15377"/>
        <dbReference type="ChEBI" id="CHEBI:15379"/>
        <dbReference type="ChEBI" id="CHEBI:17499"/>
        <dbReference type="ChEBI" id="CHEBI:65315"/>
        <dbReference type="ChEBI" id="CHEBI:136877"/>
    </reaction>
</comment>
<comment type="similarity">
    <text evidence="1">Belongs to the TrhO family.</text>
</comment>
<feature type="chain" id="PRO_1000135460" description="tRNA uridine(34) hydroxylase">
    <location>
        <begin position="1"/>
        <end position="319"/>
    </location>
</feature>
<feature type="domain" description="Rhodanese" evidence="1">
    <location>
        <begin position="127"/>
        <end position="221"/>
    </location>
</feature>
<feature type="active site" description="Cysteine persulfide intermediate" evidence="1">
    <location>
        <position position="181"/>
    </location>
</feature>
<accession>C3L6L9</accession>
<keyword id="KW-0560">Oxidoreductase</keyword>
<keyword id="KW-0819">tRNA processing</keyword>
<protein>
    <recommendedName>
        <fullName evidence="1">tRNA uridine(34) hydroxylase</fullName>
        <ecNumber evidence="1">1.14.-.-</ecNumber>
    </recommendedName>
    <alternativeName>
        <fullName evidence="1">tRNA hydroxylation protein O</fullName>
    </alternativeName>
</protein>